<evidence type="ECO:0000250" key="1"/>
<evidence type="ECO:0000250" key="2">
    <source>
        <dbReference type="UniProtKB" id="P00157"/>
    </source>
</evidence>
<evidence type="ECO:0000255" key="3">
    <source>
        <dbReference type="PROSITE-ProRule" id="PRU00967"/>
    </source>
</evidence>
<evidence type="ECO:0000255" key="4">
    <source>
        <dbReference type="PROSITE-ProRule" id="PRU00968"/>
    </source>
</evidence>
<accession>O48285</accession>
<gene>
    <name type="primary">MT-CYB</name>
    <name type="synonym">COB</name>
    <name type="synonym">CYTB</name>
    <name type="synonym">MTCYB</name>
</gene>
<protein>
    <recommendedName>
        <fullName>Cytochrome b</fullName>
    </recommendedName>
    <alternativeName>
        <fullName>Complex III subunit 3</fullName>
    </alternativeName>
    <alternativeName>
        <fullName>Complex III subunit III</fullName>
    </alternativeName>
    <alternativeName>
        <fullName>Cytochrome b-c1 complex subunit 3</fullName>
    </alternativeName>
    <alternativeName>
        <fullName>Ubiquinol-cytochrome-c reductase complex cytochrome b subunit</fullName>
    </alternativeName>
</protein>
<name>CYB_HETHT</name>
<reference key="1">
    <citation type="journal article" date="1998" name="Mol. Phylogenet. Evol.">
        <title>Phylogenetic relationships and geographic structure in pocket gophers in the genus Thomomys.</title>
        <authorList>
            <person name="Smith M.F."/>
        </authorList>
    </citation>
    <scope>NUCLEOTIDE SEQUENCE [GENOMIC DNA]</scope>
</reference>
<organism>
    <name type="scientific">Heterogeomys heterodus</name>
    <name type="common">Variable pocket gopher</name>
    <name type="synonym">Orthogeomys heterodus</name>
    <dbReference type="NCBI Taxonomy" id="3370057"/>
    <lineage>
        <taxon>Eukaryota</taxon>
        <taxon>Metazoa</taxon>
        <taxon>Chordata</taxon>
        <taxon>Craniata</taxon>
        <taxon>Vertebrata</taxon>
        <taxon>Euteleostomi</taxon>
        <taxon>Mammalia</taxon>
        <taxon>Eutheria</taxon>
        <taxon>Euarchontoglires</taxon>
        <taxon>Glires</taxon>
        <taxon>Rodentia</taxon>
        <taxon>Castorimorpha</taxon>
        <taxon>Geomyidae</taxon>
        <taxon>Heterogeomys</taxon>
    </lineage>
</organism>
<feature type="chain" id="PRO_0000255105" description="Cytochrome b">
    <location>
        <begin position="1"/>
        <end position="377"/>
    </location>
</feature>
<feature type="transmembrane region" description="Helical" evidence="2">
    <location>
        <begin position="31"/>
        <end position="51"/>
    </location>
</feature>
<feature type="transmembrane region" description="Helical" evidence="2">
    <location>
        <begin position="75"/>
        <end position="96"/>
    </location>
</feature>
<feature type="transmembrane region" description="Helical" evidence="2">
    <location>
        <begin position="111"/>
        <end position="131"/>
    </location>
</feature>
<feature type="transmembrane region" description="Helical" evidence="2">
    <location>
        <begin position="176"/>
        <end position="196"/>
    </location>
</feature>
<feature type="transmembrane region" description="Helical" evidence="2">
    <location>
        <begin position="224"/>
        <end position="244"/>
    </location>
</feature>
<feature type="transmembrane region" description="Helical" evidence="2">
    <location>
        <begin position="286"/>
        <end position="306"/>
    </location>
</feature>
<feature type="transmembrane region" description="Helical" evidence="2">
    <location>
        <begin position="318"/>
        <end position="338"/>
    </location>
</feature>
<feature type="transmembrane region" description="Helical" evidence="2">
    <location>
        <begin position="345"/>
        <end position="365"/>
    </location>
</feature>
<feature type="binding site" description="axial binding residue" evidence="2">
    <location>
        <position position="81"/>
    </location>
    <ligand>
        <name>heme b</name>
        <dbReference type="ChEBI" id="CHEBI:60344"/>
        <label>b562</label>
    </ligand>
    <ligandPart>
        <name>Fe</name>
        <dbReference type="ChEBI" id="CHEBI:18248"/>
    </ligandPart>
</feature>
<feature type="binding site" description="axial binding residue" evidence="2">
    <location>
        <position position="95"/>
    </location>
    <ligand>
        <name>heme b</name>
        <dbReference type="ChEBI" id="CHEBI:60344"/>
        <label>b566</label>
    </ligand>
    <ligandPart>
        <name>Fe</name>
        <dbReference type="ChEBI" id="CHEBI:18248"/>
    </ligandPart>
</feature>
<feature type="binding site" description="axial binding residue" evidence="2">
    <location>
        <position position="180"/>
    </location>
    <ligand>
        <name>heme b</name>
        <dbReference type="ChEBI" id="CHEBI:60344"/>
        <label>b562</label>
    </ligand>
    <ligandPart>
        <name>Fe</name>
        <dbReference type="ChEBI" id="CHEBI:18248"/>
    </ligandPart>
</feature>
<feature type="binding site" description="axial binding residue" evidence="2">
    <location>
        <position position="194"/>
    </location>
    <ligand>
        <name>heme b</name>
        <dbReference type="ChEBI" id="CHEBI:60344"/>
        <label>b566</label>
    </ligand>
    <ligandPart>
        <name>Fe</name>
        <dbReference type="ChEBI" id="CHEBI:18248"/>
    </ligandPart>
</feature>
<feature type="binding site" evidence="2">
    <location>
        <position position="199"/>
    </location>
    <ligand>
        <name>a ubiquinone</name>
        <dbReference type="ChEBI" id="CHEBI:16389"/>
    </ligand>
</feature>
<proteinExistence type="inferred from homology"/>
<comment type="function">
    <text evidence="2">Component of the ubiquinol-cytochrome c reductase complex (complex III or cytochrome b-c1 complex) that is part of the mitochondrial respiratory chain. The b-c1 complex mediates electron transfer from ubiquinol to cytochrome c. Contributes to the generation of a proton gradient across the mitochondrial membrane that is then used for ATP synthesis.</text>
</comment>
<comment type="cofactor">
    <cofactor evidence="2">
        <name>heme b</name>
        <dbReference type="ChEBI" id="CHEBI:60344"/>
    </cofactor>
    <text evidence="2">Binds 2 heme b groups non-covalently.</text>
</comment>
<comment type="subunit">
    <text evidence="2">The cytochrome bc1 complex contains 11 subunits: 3 respiratory subunits (MT-CYB, CYC1 and UQCRFS1), 2 core proteins (UQCRC1 and UQCRC2) and 6 low-molecular weight proteins (UQCRH/QCR6, UQCRB/QCR7, UQCRQ/QCR8, UQCR10/QCR9, UQCR11/QCR10 and a cleavage product of UQCRFS1). This cytochrome bc1 complex then forms a dimer.</text>
</comment>
<comment type="subcellular location">
    <subcellularLocation>
        <location evidence="2">Mitochondrion inner membrane</location>
        <topology evidence="2">Multi-pass membrane protein</topology>
    </subcellularLocation>
</comment>
<comment type="miscellaneous">
    <text evidence="1">Heme 1 (or BL or b562) is low-potential and absorbs at about 562 nm, and heme 2 (or BH or b566) is high-potential and absorbs at about 566 nm.</text>
</comment>
<comment type="similarity">
    <text evidence="3 4">Belongs to the cytochrome b family.</text>
</comment>
<comment type="caution">
    <text evidence="2">The full-length protein contains only eight transmembrane helices, not nine as predicted by bioinformatics tools.</text>
</comment>
<keyword id="KW-0249">Electron transport</keyword>
<keyword id="KW-0349">Heme</keyword>
<keyword id="KW-0408">Iron</keyword>
<keyword id="KW-0472">Membrane</keyword>
<keyword id="KW-0479">Metal-binding</keyword>
<keyword id="KW-0496">Mitochondrion</keyword>
<keyword id="KW-0999">Mitochondrion inner membrane</keyword>
<keyword id="KW-0679">Respiratory chain</keyword>
<keyword id="KW-0812">Transmembrane</keyword>
<keyword id="KW-1133">Transmembrane helix</keyword>
<keyword id="KW-0813">Transport</keyword>
<keyword id="KW-0830">Ubiquinone</keyword>
<geneLocation type="mitochondrion"/>
<dbReference type="EMBL" id="U65299">
    <property type="protein sequence ID" value="AAC39975.1"/>
    <property type="molecule type" value="Genomic_DNA"/>
</dbReference>
<dbReference type="EMBL" id="U65300">
    <property type="protein sequence ID" value="AAC39976.1"/>
    <property type="molecule type" value="Genomic_DNA"/>
</dbReference>
<dbReference type="GO" id="GO:0005743">
    <property type="term" value="C:mitochondrial inner membrane"/>
    <property type="evidence" value="ECO:0007669"/>
    <property type="project" value="UniProtKB-SubCell"/>
</dbReference>
<dbReference type="GO" id="GO:0045275">
    <property type="term" value="C:respiratory chain complex III"/>
    <property type="evidence" value="ECO:0007669"/>
    <property type="project" value="InterPro"/>
</dbReference>
<dbReference type="GO" id="GO:0046872">
    <property type="term" value="F:metal ion binding"/>
    <property type="evidence" value="ECO:0007669"/>
    <property type="project" value="UniProtKB-KW"/>
</dbReference>
<dbReference type="GO" id="GO:0008121">
    <property type="term" value="F:ubiquinol-cytochrome-c reductase activity"/>
    <property type="evidence" value="ECO:0007669"/>
    <property type="project" value="InterPro"/>
</dbReference>
<dbReference type="GO" id="GO:0006122">
    <property type="term" value="P:mitochondrial electron transport, ubiquinol to cytochrome c"/>
    <property type="evidence" value="ECO:0007669"/>
    <property type="project" value="TreeGrafter"/>
</dbReference>
<dbReference type="CDD" id="cd00290">
    <property type="entry name" value="cytochrome_b_C"/>
    <property type="match status" value="1"/>
</dbReference>
<dbReference type="CDD" id="cd00284">
    <property type="entry name" value="Cytochrome_b_N"/>
    <property type="match status" value="1"/>
</dbReference>
<dbReference type="FunFam" id="1.20.810.10:FF:000002">
    <property type="entry name" value="Cytochrome b"/>
    <property type="match status" value="1"/>
</dbReference>
<dbReference type="Gene3D" id="1.20.810.10">
    <property type="entry name" value="Cytochrome Bc1 Complex, Chain C"/>
    <property type="match status" value="1"/>
</dbReference>
<dbReference type="InterPro" id="IPR005798">
    <property type="entry name" value="Cyt_b/b6_C"/>
</dbReference>
<dbReference type="InterPro" id="IPR036150">
    <property type="entry name" value="Cyt_b/b6_C_sf"/>
</dbReference>
<dbReference type="InterPro" id="IPR005797">
    <property type="entry name" value="Cyt_b/b6_N"/>
</dbReference>
<dbReference type="InterPro" id="IPR027387">
    <property type="entry name" value="Cytb/b6-like_sf"/>
</dbReference>
<dbReference type="InterPro" id="IPR030689">
    <property type="entry name" value="Cytochrome_b"/>
</dbReference>
<dbReference type="InterPro" id="IPR048260">
    <property type="entry name" value="Cytochrome_b_C_euk/bac"/>
</dbReference>
<dbReference type="InterPro" id="IPR048259">
    <property type="entry name" value="Cytochrome_b_N_euk/bac"/>
</dbReference>
<dbReference type="InterPro" id="IPR016174">
    <property type="entry name" value="Di-haem_cyt_TM"/>
</dbReference>
<dbReference type="PANTHER" id="PTHR19271">
    <property type="entry name" value="CYTOCHROME B"/>
    <property type="match status" value="1"/>
</dbReference>
<dbReference type="PANTHER" id="PTHR19271:SF16">
    <property type="entry name" value="CYTOCHROME B"/>
    <property type="match status" value="1"/>
</dbReference>
<dbReference type="Pfam" id="PF00032">
    <property type="entry name" value="Cytochrom_B_C"/>
    <property type="match status" value="1"/>
</dbReference>
<dbReference type="Pfam" id="PF00033">
    <property type="entry name" value="Cytochrome_B"/>
    <property type="match status" value="1"/>
</dbReference>
<dbReference type="PIRSF" id="PIRSF038885">
    <property type="entry name" value="COB"/>
    <property type="match status" value="1"/>
</dbReference>
<dbReference type="SUPFAM" id="SSF81648">
    <property type="entry name" value="a domain/subunit of cytochrome bc1 complex (Ubiquinol-cytochrome c reductase)"/>
    <property type="match status" value="1"/>
</dbReference>
<dbReference type="SUPFAM" id="SSF81342">
    <property type="entry name" value="Transmembrane di-heme cytochromes"/>
    <property type="match status" value="1"/>
</dbReference>
<dbReference type="PROSITE" id="PS51003">
    <property type="entry name" value="CYTB_CTER"/>
    <property type="match status" value="1"/>
</dbReference>
<dbReference type="PROSITE" id="PS51002">
    <property type="entry name" value="CYTB_NTER"/>
    <property type="match status" value="1"/>
</dbReference>
<sequence length="377" mass="42569">MMRKSHPLMKIVNHAFIDLPTPPNISGWWNFGSLLGLCLILQISTGLFLAMHYTSDTLTAFSSVAHICRDVNYGWLIRYMHANGASLFFICLYIHIGRGIYYGSYLYKETWNIGILLLFLTMATAFMGYVLPWGQMSFWGATVITNLLSAIPYIGPDLVEWIWGGFSVDKATLTRFFALHFILPFIITALVLVHLLFLHETGSNNPLGIPSDCGKVPFHPYYTTKDFLGVIMILMLFLTTVLFLPDKLGDPDNYTPANPLNTPPHIXPEWYFLFAYAILRSIPNKLGGVLALVSSILVLALLPYLHTSKQRSLSFRPLSQTLFWMLVSDLILLTWIGGQPVEPPFIIIGQLASIMYFTIILLLMPVAGLIENKMLKW</sequence>